<protein>
    <recommendedName>
        <fullName evidence="1">Transcription-repair-coupling factor</fullName>
        <shortName evidence="1">TRCF</shortName>
        <ecNumber evidence="1">3.6.4.-</ecNumber>
    </recommendedName>
</protein>
<keyword id="KW-0067">ATP-binding</keyword>
<keyword id="KW-0963">Cytoplasm</keyword>
<keyword id="KW-0227">DNA damage</keyword>
<keyword id="KW-0234">DNA repair</keyword>
<keyword id="KW-0238">DNA-binding</keyword>
<keyword id="KW-0347">Helicase</keyword>
<keyword id="KW-0378">Hydrolase</keyword>
<keyword id="KW-0547">Nucleotide-binding</keyword>
<proteinExistence type="inferred from homology"/>
<dbReference type="EC" id="3.6.4.-" evidence="1"/>
<dbReference type="EMBL" id="AF031084">
    <property type="protein sequence ID" value="AAB94134.1"/>
    <property type="molecule type" value="Genomic_DNA"/>
</dbReference>
<dbReference type="PIR" id="T31114">
    <property type="entry name" value="T31114"/>
</dbReference>
<dbReference type="SMR" id="O52236"/>
<dbReference type="GO" id="GO:0005737">
    <property type="term" value="C:cytoplasm"/>
    <property type="evidence" value="ECO:0007669"/>
    <property type="project" value="UniProtKB-SubCell"/>
</dbReference>
<dbReference type="GO" id="GO:0005524">
    <property type="term" value="F:ATP binding"/>
    <property type="evidence" value="ECO:0007669"/>
    <property type="project" value="UniProtKB-UniRule"/>
</dbReference>
<dbReference type="GO" id="GO:0003684">
    <property type="term" value="F:damaged DNA binding"/>
    <property type="evidence" value="ECO:0007669"/>
    <property type="project" value="InterPro"/>
</dbReference>
<dbReference type="GO" id="GO:0003678">
    <property type="term" value="F:DNA helicase activity"/>
    <property type="evidence" value="ECO:0007669"/>
    <property type="project" value="TreeGrafter"/>
</dbReference>
<dbReference type="GO" id="GO:0016787">
    <property type="term" value="F:hydrolase activity"/>
    <property type="evidence" value="ECO:0007669"/>
    <property type="project" value="UniProtKB-KW"/>
</dbReference>
<dbReference type="GO" id="GO:0006355">
    <property type="term" value="P:regulation of DNA-templated transcription"/>
    <property type="evidence" value="ECO:0007669"/>
    <property type="project" value="UniProtKB-UniRule"/>
</dbReference>
<dbReference type="GO" id="GO:0000716">
    <property type="term" value="P:transcription-coupled nucleotide-excision repair, DNA damage recognition"/>
    <property type="evidence" value="ECO:0007669"/>
    <property type="project" value="UniProtKB-UniRule"/>
</dbReference>
<dbReference type="CDD" id="cd17991">
    <property type="entry name" value="DEXHc_TRCF"/>
    <property type="match status" value="1"/>
</dbReference>
<dbReference type="CDD" id="cd18810">
    <property type="entry name" value="SF2_C_TRCF"/>
    <property type="match status" value="1"/>
</dbReference>
<dbReference type="FunFam" id="3.40.50.300:FF:000546">
    <property type="entry name" value="Transcription-repair-coupling factor"/>
    <property type="match status" value="1"/>
</dbReference>
<dbReference type="Gene3D" id="2.40.10.170">
    <property type="match status" value="1"/>
</dbReference>
<dbReference type="Gene3D" id="3.40.50.11180">
    <property type="match status" value="1"/>
</dbReference>
<dbReference type="Gene3D" id="3.40.50.300">
    <property type="entry name" value="P-loop containing nucleotide triphosphate hydrolases"/>
    <property type="match status" value="2"/>
</dbReference>
<dbReference type="Gene3D" id="3.30.2060.10">
    <property type="entry name" value="Penicillin-binding protein 1b domain"/>
    <property type="match status" value="1"/>
</dbReference>
<dbReference type="Gene3D" id="3.90.1150.50">
    <property type="entry name" value="Transcription-repair-coupling factor, D7 domain"/>
    <property type="match status" value="1"/>
</dbReference>
<dbReference type="HAMAP" id="MF_00969">
    <property type="entry name" value="TRCF"/>
    <property type="match status" value="1"/>
</dbReference>
<dbReference type="InterPro" id="IPR003711">
    <property type="entry name" value="CarD-like/TRCF_RID"/>
</dbReference>
<dbReference type="InterPro" id="IPR036101">
    <property type="entry name" value="CarD-like/TRCF_RID_sf"/>
</dbReference>
<dbReference type="InterPro" id="IPR011545">
    <property type="entry name" value="DEAD/DEAH_box_helicase_dom"/>
</dbReference>
<dbReference type="InterPro" id="IPR014001">
    <property type="entry name" value="Helicase_ATP-bd"/>
</dbReference>
<dbReference type="InterPro" id="IPR001650">
    <property type="entry name" value="Helicase_C-like"/>
</dbReference>
<dbReference type="InterPro" id="IPR004576">
    <property type="entry name" value="Mfd"/>
</dbReference>
<dbReference type="InterPro" id="IPR027417">
    <property type="entry name" value="P-loop_NTPase"/>
</dbReference>
<dbReference type="InterPro" id="IPR047112">
    <property type="entry name" value="RecG/Mfd"/>
</dbReference>
<dbReference type="InterPro" id="IPR037235">
    <property type="entry name" value="TRCF-like_C_D7"/>
</dbReference>
<dbReference type="InterPro" id="IPR005118">
    <property type="entry name" value="TRCF_C"/>
</dbReference>
<dbReference type="InterPro" id="IPR041471">
    <property type="entry name" value="UvrB_inter"/>
</dbReference>
<dbReference type="NCBIfam" id="TIGR00580">
    <property type="entry name" value="mfd"/>
    <property type="match status" value="1"/>
</dbReference>
<dbReference type="PANTHER" id="PTHR47964">
    <property type="entry name" value="ATP-DEPENDENT DNA HELICASE HOMOLOG RECG, CHLOROPLASTIC"/>
    <property type="match status" value="1"/>
</dbReference>
<dbReference type="PANTHER" id="PTHR47964:SF1">
    <property type="entry name" value="ATP-DEPENDENT DNA HELICASE HOMOLOG RECG, CHLOROPLASTIC"/>
    <property type="match status" value="1"/>
</dbReference>
<dbReference type="Pfam" id="PF02559">
    <property type="entry name" value="CarD_TRCF_RID"/>
    <property type="match status" value="1"/>
</dbReference>
<dbReference type="Pfam" id="PF00270">
    <property type="entry name" value="DEAD"/>
    <property type="match status" value="1"/>
</dbReference>
<dbReference type="Pfam" id="PF00271">
    <property type="entry name" value="Helicase_C"/>
    <property type="match status" value="1"/>
</dbReference>
<dbReference type="Pfam" id="PF03461">
    <property type="entry name" value="TRCF"/>
    <property type="match status" value="1"/>
</dbReference>
<dbReference type="Pfam" id="PF17757">
    <property type="entry name" value="UvrB_inter"/>
    <property type="match status" value="1"/>
</dbReference>
<dbReference type="SMART" id="SM01058">
    <property type="entry name" value="CarD_TRCF"/>
    <property type="match status" value="1"/>
</dbReference>
<dbReference type="SMART" id="SM00487">
    <property type="entry name" value="DEXDc"/>
    <property type="match status" value="1"/>
</dbReference>
<dbReference type="SMART" id="SM00490">
    <property type="entry name" value="HELICc"/>
    <property type="match status" value="1"/>
</dbReference>
<dbReference type="SMART" id="SM00982">
    <property type="entry name" value="TRCF"/>
    <property type="match status" value="1"/>
</dbReference>
<dbReference type="SUPFAM" id="SSF141259">
    <property type="entry name" value="CarD-like"/>
    <property type="match status" value="1"/>
</dbReference>
<dbReference type="SUPFAM" id="SSF52540">
    <property type="entry name" value="P-loop containing nucleoside triphosphate hydrolases"/>
    <property type="match status" value="4"/>
</dbReference>
<dbReference type="SUPFAM" id="SSF143517">
    <property type="entry name" value="TRCF domain-like"/>
    <property type="match status" value="1"/>
</dbReference>
<dbReference type="PROSITE" id="PS51192">
    <property type="entry name" value="HELICASE_ATP_BIND_1"/>
    <property type="match status" value="1"/>
</dbReference>
<dbReference type="PROSITE" id="PS51194">
    <property type="entry name" value="HELICASE_CTER"/>
    <property type="match status" value="1"/>
</dbReference>
<gene>
    <name evidence="1" type="primary">mfd</name>
    <name type="synonym">trcF</name>
</gene>
<comment type="function">
    <text evidence="1">Couples transcription and DNA repair by recognizing RNA polymerase (RNAP) stalled at DNA lesions. Mediates ATP-dependent release of RNAP and its truncated transcript from the DNA, and recruitment of nucleotide excision repair machinery to the damaged site.</text>
</comment>
<comment type="subcellular location">
    <subcellularLocation>
        <location evidence="1">Cytoplasm</location>
    </subcellularLocation>
</comment>
<comment type="similarity">
    <text evidence="1">In the N-terminal section; belongs to the UvrB family.</text>
</comment>
<comment type="similarity">
    <text evidence="1">In the C-terminal section; belongs to the helicase family. RecG subfamily.</text>
</comment>
<sequence length="1201" mass="132665">MRLLITLGPSGSTHGHSLHTDAGRRRGGRPFAQVVDELRAGQRVRTQGLKGAARGHVLARLHGALRAPLVCVAVDEEAADALAADLSFFLGGQGSLLAPRVLRLPADEVLPYDEVSPDAAAVTERLGALFHLGQGTRFPALVLSVRALHRKVLPLAVMRALAARVAVGQDFDRDSLARRLVRMGYQNSPLVEDVGTFSVRGDLLDVFSPLYDKPVRLEFFGDTIESIRAFDPQSQRTVDALKEVDLVPAREVLLTDETRPRAESAARAVADRINLPTIKLREQLDALREGLPGFGMEGLLPGFFEDGLSTVFDFLRDWSPEAPVIYLDDPLGQDRAADTLWEELERSHGAAEARQELICPPLEHFLSREDVNQRMQSFRVLEGGGLSLAQTERPPVHFSFGGTQDLREAILAHHGEEGALSPLVERLERWRELRVACVVACGTLSQADRLKRLLMDRNVMVKVHTEPLEDAVALYEPSIRAHLFTGEVSHGFVDGPGGLAVLADEEIFGARARRRPKRSKKLDAFGSGFGDLKEGDLIVHTDFGIGRYAGLTKMEVNGVPGDFLVLEYAGRDKIYLPVGRMRLIQKFSGGDPTQVQLDKLGTTSWEKTKKRVKEQLLKMAAELLQIAAARKAHPGHAFSAPDRYFAQFEADFEFEETPDQAKAIEDVLADMQKPEPMDRLVCGDVGYGKTEVAMRAAFKAALDRKQVAVLVPTTVLAQQHFLSFKKRFADYPVTVEVISGLKKAPEVREILKRAKEGKVDILIGTHKLLGGEVAFKELGLMIVDEEQRFGVKQKESLKKWRSQIDVLTLTATPIPRTLHMSMSGVRDMSIIATPPQDRRAIRTFVMKYEDTVVKEAIEREVARGGQVFFVHNRVESLPSIETQLRALVPQVSIGVAHGQMGEGQLEKVMLAFTEKKYQVLLCTSIIESGIDISSANTMIVNRADQFGLAQLYQLRGRVGRSKERAYAYLLVPSRRAVTKDAQRRLEVLQNFTELGAGFSIASHDLEIRGAGNLLGDKQSGAIAEIGFDMYAQLLEEAVAEMQGQPPKVQIEPDVTLPMPALIPDDYVSDVHQRLVFYKRFSQASHPDEVTDLRAELVDRYGEAPDEVDHLSELTLLKIDMRDLRLRGLEVGTTRLVVTLGADALLDGPKVAGLVQRSKGVYRLTPDMKLIARAPQGASGQDLISEAKKVLRDLSHCALPQA</sequence>
<name>MFD_MYXXA</name>
<evidence type="ECO:0000255" key="1">
    <source>
        <dbReference type="HAMAP-Rule" id="MF_00969"/>
    </source>
</evidence>
<evidence type="ECO:0000256" key="2">
    <source>
        <dbReference type="SAM" id="MobiDB-lite"/>
    </source>
</evidence>
<accession>O52236</accession>
<feature type="chain" id="PRO_0000102172" description="Transcription-repair-coupling factor">
    <location>
        <begin position="1"/>
        <end position="1201"/>
    </location>
</feature>
<feature type="domain" description="Helicase ATP-binding" evidence="1">
    <location>
        <begin position="670"/>
        <end position="831"/>
    </location>
</feature>
<feature type="domain" description="Helicase C-terminal" evidence="1">
    <location>
        <begin position="852"/>
        <end position="1006"/>
    </location>
</feature>
<feature type="region of interest" description="Disordered" evidence="2">
    <location>
        <begin position="1"/>
        <end position="27"/>
    </location>
</feature>
<feature type="short sequence motif" description="DEEQ box">
    <location>
        <begin position="784"/>
        <end position="787"/>
    </location>
</feature>
<feature type="binding site" evidence="1">
    <location>
        <begin position="683"/>
        <end position="690"/>
    </location>
    <ligand>
        <name>ATP</name>
        <dbReference type="ChEBI" id="CHEBI:30616"/>
    </ligand>
</feature>
<reference key="1">
    <citation type="submission" date="1997-10" db="EMBL/GenBank/DDBJ databases">
        <authorList>
            <person name="Garza A.G."/>
            <person name="Pollack J.S."/>
            <person name="Harris B.Z."/>
            <person name="Lee A."/>
            <person name="Keseler I."/>
            <person name="Licking E.F."/>
            <person name="Singer M.H."/>
        </authorList>
    </citation>
    <scope>NUCLEOTIDE SEQUENCE [GENOMIC DNA]</scope>
    <source>
        <strain>DK101</strain>
    </source>
</reference>
<organism>
    <name type="scientific">Myxococcus xanthus</name>
    <dbReference type="NCBI Taxonomy" id="34"/>
    <lineage>
        <taxon>Bacteria</taxon>
        <taxon>Pseudomonadati</taxon>
        <taxon>Myxococcota</taxon>
        <taxon>Myxococcia</taxon>
        <taxon>Myxococcales</taxon>
        <taxon>Cystobacterineae</taxon>
        <taxon>Myxococcaceae</taxon>
        <taxon>Myxococcus</taxon>
    </lineage>
</organism>